<proteinExistence type="evidence at transcript level"/>
<organism>
    <name type="scientific">Rattus norvegicus</name>
    <name type="common">Rat</name>
    <dbReference type="NCBI Taxonomy" id="10116"/>
    <lineage>
        <taxon>Eukaryota</taxon>
        <taxon>Metazoa</taxon>
        <taxon>Chordata</taxon>
        <taxon>Craniata</taxon>
        <taxon>Vertebrata</taxon>
        <taxon>Euteleostomi</taxon>
        <taxon>Mammalia</taxon>
        <taxon>Eutheria</taxon>
        <taxon>Euarchontoglires</taxon>
        <taxon>Glires</taxon>
        <taxon>Rodentia</taxon>
        <taxon>Myomorpha</taxon>
        <taxon>Muroidea</taxon>
        <taxon>Muridae</taxon>
        <taxon>Murinae</taxon>
        <taxon>Rattus</taxon>
    </lineage>
</organism>
<keyword id="KW-0025">Alternative splicing</keyword>
<keyword id="KW-0175">Coiled coil</keyword>
<keyword id="KW-1185">Reference proteome</keyword>
<sequence>MLNTDQLLVRAISERPRKSTEPLVPGTPTGLFSLLSNISPEEQGRLGSGDSLQSQSCQQQRSYSAGQTTKKERKPRRRNKKGRGSAEAEDLFSSPRKPSFPFQWAWESFIIDGQALLQSGSSVAVGHRSLLFPPAAPQCKTRHKSVANLSEDLRACHKSEVQNLGRRYQPGAWANLSLPLGKAESQGLERPTFWSTGKGSGSECEDVSEVEGQNADEAEKSLSTGELPQLPGQGLTLEEELISEVMEEEEHNRRKGSSVNKGRNSGEKGSEEGELQSHNQGSSSNSNSLRKSPKGTSGAKEFKGPWDLERLHRQLQEELESGPQKQTWKALRAAVQASARNRKTPVTGEEESFLTANFPNRTFHKRQEATRNLLQAWEQQQLKEKQQAEMRRAREQQVQQQVARCLAAYTPGGNRGTLGPQRKLEELRRKERQRFAEYQAELQGIQHRVQARPFLFQQAMQTNARLTANRRFSQVLSALGVDEEQLLAEAGNAEGIPRKHRSYRSFGVEMESSPQSPPKTEPTSSQPGRHPSPTLD</sequence>
<reference key="1">
    <citation type="submission" date="2004-07" db="EMBL/GenBank/DDBJ databases">
        <title>Rattus norvegicus homolog of the gene encoding a (fibrous sheath) protein (TSGA10IP) that interacts with TSGA10.</title>
        <authorList>
            <person name="Behnam B."/>
            <person name="Manistre S."/>
            <person name="Hoorn F.V."/>
            <person name="Wolfe J."/>
        </authorList>
    </citation>
    <scope>NUCLEOTIDE SEQUENCE [MRNA] (ISOFORM 2)</scope>
    <source>
        <strain>Sprague-Dawley</strain>
        <tissue>Testis</tissue>
    </source>
</reference>
<reference key="2">
    <citation type="journal article" date="2004" name="Genome Res.">
        <title>The status, quality, and expansion of the NIH full-length cDNA project: the Mammalian Gene Collection (MGC).</title>
        <authorList>
            <consortium name="The MGC Project Team"/>
        </authorList>
    </citation>
    <scope>NUCLEOTIDE SEQUENCE [LARGE SCALE MRNA] (ISOFORM 1)</scope>
    <source>
        <tissue>Testis</tissue>
    </source>
</reference>
<accession>Q66MI6</accession>
<accession>Q4QRC4</accession>
<feature type="chain" id="PRO_0000331423" description="Testis-specific protein 10-interacting protein">
    <location>
        <begin position="1"/>
        <end position="536"/>
    </location>
</feature>
<feature type="region of interest" description="Disordered" evidence="2">
    <location>
        <begin position="1"/>
        <end position="94"/>
    </location>
</feature>
<feature type="region of interest" description="Disordered" evidence="2">
    <location>
        <begin position="185"/>
        <end position="234"/>
    </location>
</feature>
<feature type="region of interest" description="Disordered" evidence="2">
    <location>
        <begin position="246"/>
        <end position="305"/>
    </location>
</feature>
<feature type="region of interest" description="Disordered" evidence="2">
    <location>
        <begin position="491"/>
        <end position="536"/>
    </location>
</feature>
<feature type="coiled-coil region" evidence="1">
    <location>
        <begin position="375"/>
        <end position="451"/>
    </location>
</feature>
<feature type="compositionally biased region" description="Low complexity" evidence="2">
    <location>
        <begin position="48"/>
        <end position="64"/>
    </location>
</feature>
<feature type="compositionally biased region" description="Basic residues" evidence="2">
    <location>
        <begin position="71"/>
        <end position="83"/>
    </location>
</feature>
<feature type="splice variant" id="VSP_033198" description="In isoform 2." evidence="3">
    <original>A</original>
    <variation>ATRTWALRDTYFFPQSLTSGPHAPPCYLGLPRAPDPHGHPPFL</variation>
    <location>
        <position position="369"/>
    </location>
</feature>
<dbReference type="EMBL" id="AY690667">
    <property type="protein sequence ID" value="AAU04556.1"/>
    <property type="status" value="ALT_FRAME"/>
    <property type="molecule type" value="mRNA"/>
</dbReference>
<dbReference type="EMBL" id="BC097254">
    <property type="protein sequence ID" value="AAH97254.1"/>
    <property type="molecule type" value="mRNA"/>
</dbReference>
<dbReference type="RefSeq" id="NP_001004278.2">
    <molecule id="Q66MI6-2"/>
    <property type="nucleotide sequence ID" value="NM_001004278.3"/>
</dbReference>
<dbReference type="RefSeq" id="NP_001257665.1">
    <property type="nucleotide sequence ID" value="NM_001270736.1"/>
</dbReference>
<dbReference type="RefSeq" id="NP_001257666.1">
    <molecule id="Q66MI6-1"/>
    <property type="nucleotide sequence ID" value="NM_001270737.1"/>
</dbReference>
<dbReference type="SMR" id="Q66MI6"/>
<dbReference type="FunCoup" id="Q66MI6">
    <property type="interactions" value="17"/>
</dbReference>
<dbReference type="STRING" id="10116.ENSRNOP00000068676"/>
<dbReference type="PhosphoSitePlus" id="Q66MI6"/>
<dbReference type="PaxDb" id="10116-ENSRNOP00000033901"/>
<dbReference type="GeneID" id="361707"/>
<dbReference type="KEGG" id="rno:361707"/>
<dbReference type="UCSC" id="RGD:1302964">
    <molecule id="Q66MI6-1"/>
    <property type="organism name" value="rat"/>
</dbReference>
<dbReference type="AGR" id="RGD:1302964"/>
<dbReference type="CTD" id="254187"/>
<dbReference type="RGD" id="1302964">
    <property type="gene designation" value="Tsga10ip"/>
</dbReference>
<dbReference type="eggNOG" id="ENOG502S4NS">
    <property type="taxonomic scope" value="Eukaryota"/>
</dbReference>
<dbReference type="InParanoid" id="Q66MI6"/>
<dbReference type="OrthoDB" id="9897099at2759"/>
<dbReference type="PhylomeDB" id="Q66MI6"/>
<dbReference type="TreeFam" id="TF321199"/>
<dbReference type="PRO" id="PR:Q66MI6"/>
<dbReference type="Proteomes" id="UP000002494">
    <property type="component" value="Unplaced"/>
</dbReference>
<dbReference type="GO" id="GO:0005856">
    <property type="term" value="C:cytoskeleton"/>
    <property type="evidence" value="ECO:0007669"/>
    <property type="project" value="UniProtKB-ARBA"/>
</dbReference>
<dbReference type="GO" id="GO:0032391">
    <property type="term" value="C:photoreceptor connecting cilium"/>
    <property type="evidence" value="ECO:0000318"/>
    <property type="project" value="GO_Central"/>
</dbReference>
<dbReference type="GO" id="GO:0044782">
    <property type="term" value="P:cilium organization"/>
    <property type="evidence" value="ECO:0000318"/>
    <property type="project" value="GO_Central"/>
</dbReference>
<dbReference type="InterPro" id="IPR051655">
    <property type="entry name" value="FAM161"/>
</dbReference>
<dbReference type="PANTHER" id="PTHR21501">
    <property type="entry name" value="PROTEIN FAM-161"/>
    <property type="match status" value="1"/>
</dbReference>
<dbReference type="PANTHER" id="PTHR21501:SF5">
    <property type="entry name" value="TESTIS-SPECIFIC PROTEIN 10-INTERACTING PROTEIN"/>
    <property type="match status" value="1"/>
</dbReference>
<comment type="alternative products">
    <event type="alternative splicing"/>
    <isoform>
        <id>Q66MI6-1</id>
        <name>1</name>
        <sequence type="displayed"/>
    </isoform>
    <isoform>
        <id>Q66MI6-2</id>
        <name>2</name>
        <sequence type="described" ref="VSP_033198"/>
    </isoform>
</comment>
<comment type="sequence caution" evidence="4">
    <conflict type="frameshift">
        <sequence resource="EMBL-CDS" id="AAU04556"/>
    </conflict>
</comment>
<gene>
    <name type="primary">Tsga10ip</name>
</gene>
<protein>
    <recommendedName>
        <fullName>Testis-specific protein 10-interacting protein</fullName>
    </recommendedName>
    <alternativeName>
        <fullName>Tsga10-interacting protein</fullName>
    </alternativeName>
</protein>
<name>T10IP_RAT</name>
<evidence type="ECO:0000255" key="1"/>
<evidence type="ECO:0000256" key="2">
    <source>
        <dbReference type="SAM" id="MobiDB-lite"/>
    </source>
</evidence>
<evidence type="ECO:0000303" key="3">
    <source ref="1"/>
</evidence>
<evidence type="ECO:0000305" key="4"/>